<protein>
    <recommendedName>
        <fullName evidence="1">UPF0102 protein HRM2_30940</fullName>
    </recommendedName>
</protein>
<reference key="1">
    <citation type="journal article" date="2009" name="Environ. Microbiol.">
        <title>Genome sequence of Desulfobacterium autotrophicum HRM2, a marine sulfate reducer oxidizing organic carbon completely to carbon dioxide.</title>
        <authorList>
            <person name="Strittmatter A.W."/>
            <person name="Liesegang H."/>
            <person name="Rabus R."/>
            <person name="Decker I."/>
            <person name="Amann J."/>
            <person name="Andres S."/>
            <person name="Henne A."/>
            <person name="Fricke W.F."/>
            <person name="Martinez-Arias R."/>
            <person name="Bartels D."/>
            <person name="Goesmann A."/>
            <person name="Krause L."/>
            <person name="Puehler A."/>
            <person name="Klenk H.P."/>
            <person name="Richter M."/>
            <person name="Schuler M."/>
            <person name="Gloeckner F.O."/>
            <person name="Meyerdierks A."/>
            <person name="Gottschalk G."/>
            <person name="Amann R."/>
        </authorList>
    </citation>
    <scope>NUCLEOTIDE SEQUENCE [LARGE SCALE GENOMIC DNA]</scope>
    <source>
        <strain>ATCC 43914 / DSM 3382 / VKM B-1955 / HRM2</strain>
    </source>
</reference>
<evidence type="ECO:0000255" key="1">
    <source>
        <dbReference type="HAMAP-Rule" id="MF_00048"/>
    </source>
</evidence>
<proteinExistence type="inferred from homology"/>
<organism>
    <name type="scientific">Desulforapulum autotrophicum (strain ATCC 43914 / DSM 3382 / VKM B-1955 / HRM2)</name>
    <name type="common">Desulfobacterium autotrophicum</name>
    <dbReference type="NCBI Taxonomy" id="177437"/>
    <lineage>
        <taxon>Bacteria</taxon>
        <taxon>Pseudomonadati</taxon>
        <taxon>Thermodesulfobacteriota</taxon>
        <taxon>Desulfobacteria</taxon>
        <taxon>Desulfobacterales</taxon>
        <taxon>Desulfobacteraceae</taxon>
        <taxon>Desulforapulum</taxon>
    </lineage>
</organism>
<accession>C0QKT7</accession>
<keyword id="KW-1185">Reference proteome</keyword>
<feature type="chain" id="PRO_1000202212" description="UPF0102 protein HRM2_30940">
    <location>
        <begin position="1"/>
        <end position="121"/>
    </location>
</feature>
<sequence>MENQKQRLGRLAEDAAQAFLENQGFTIVERNYRTRVAEIDIVAKEAETLVFVEVKARGAFSRGGPREAVSLAKQQKIILGARFFLMERGLVDVRVRFDVVAVYEENNAFRIELIRNAFQTD</sequence>
<gene>
    <name type="ordered locus">HRM2_30940</name>
</gene>
<comment type="similarity">
    <text evidence="1">Belongs to the UPF0102 family.</text>
</comment>
<name>Y3094_DESAH</name>
<dbReference type="EMBL" id="CP001087">
    <property type="protein sequence ID" value="ACN16177.1"/>
    <property type="molecule type" value="Genomic_DNA"/>
</dbReference>
<dbReference type="RefSeq" id="WP_015904939.1">
    <property type="nucleotide sequence ID" value="NC_012108.1"/>
</dbReference>
<dbReference type="SMR" id="C0QKT7"/>
<dbReference type="STRING" id="177437.HRM2_30940"/>
<dbReference type="KEGG" id="dat:HRM2_30940"/>
<dbReference type="eggNOG" id="COG0792">
    <property type="taxonomic scope" value="Bacteria"/>
</dbReference>
<dbReference type="HOGENOM" id="CLU_115353_3_1_7"/>
<dbReference type="OrthoDB" id="9794876at2"/>
<dbReference type="Proteomes" id="UP000000442">
    <property type="component" value="Chromosome"/>
</dbReference>
<dbReference type="GO" id="GO:0003676">
    <property type="term" value="F:nucleic acid binding"/>
    <property type="evidence" value="ECO:0007669"/>
    <property type="project" value="InterPro"/>
</dbReference>
<dbReference type="CDD" id="cd20736">
    <property type="entry name" value="PoNe_Nuclease"/>
    <property type="match status" value="1"/>
</dbReference>
<dbReference type="Gene3D" id="3.40.1350.10">
    <property type="match status" value="1"/>
</dbReference>
<dbReference type="HAMAP" id="MF_00048">
    <property type="entry name" value="UPF0102"/>
    <property type="match status" value="1"/>
</dbReference>
<dbReference type="InterPro" id="IPR011335">
    <property type="entry name" value="Restrct_endonuc-II-like"/>
</dbReference>
<dbReference type="InterPro" id="IPR011856">
    <property type="entry name" value="tRNA_endonuc-like_dom_sf"/>
</dbReference>
<dbReference type="InterPro" id="IPR003509">
    <property type="entry name" value="UPF0102_YraN-like"/>
</dbReference>
<dbReference type="NCBIfam" id="NF009150">
    <property type="entry name" value="PRK12497.1-3"/>
    <property type="match status" value="1"/>
</dbReference>
<dbReference type="NCBIfam" id="NF009154">
    <property type="entry name" value="PRK12497.3-3"/>
    <property type="match status" value="1"/>
</dbReference>
<dbReference type="NCBIfam" id="TIGR00252">
    <property type="entry name" value="YraN family protein"/>
    <property type="match status" value="1"/>
</dbReference>
<dbReference type="PANTHER" id="PTHR34039">
    <property type="entry name" value="UPF0102 PROTEIN YRAN"/>
    <property type="match status" value="1"/>
</dbReference>
<dbReference type="PANTHER" id="PTHR34039:SF1">
    <property type="entry name" value="UPF0102 PROTEIN YRAN"/>
    <property type="match status" value="1"/>
</dbReference>
<dbReference type="Pfam" id="PF02021">
    <property type="entry name" value="UPF0102"/>
    <property type="match status" value="1"/>
</dbReference>
<dbReference type="SUPFAM" id="SSF52980">
    <property type="entry name" value="Restriction endonuclease-like"/>
    <property type="match status" value="1"/>
</dbReference>